<accession>Q2GKR7</accession>
<evidence type="ECO:0000255" key="1">
    <source>
        <dbReference type="HAMAP-Rule" id="MF_00185"/>
    </source>
</evidence>
<comment type="function">
    <text evidence="1">Catalyzes the transfer of a dimethylallyl group onto the adenine at position 37 in tRNAs that read codons beginning with uridine, leading to the formation of N6-(dimethylallyl)adenosine (i(6)A).</text>
</comment>
<comment type="catalytic activity">
    <reaction evidence="1">
        <text>adenosine(37) in tRNA + dimethylallyl diphosphate = N(6)-dimethylallyladenosine(37) in tRNA + diphosphate</text>
        <dbReference type="Rhea" id="RHEA:26482"/>
        <dbReference type="Rhea" id="RHEA-COMP:10162"/>
        <dbReference type="Rhea" id="RHEA-COMP:10375"/>
        <dbReference type="ChEBI" id="CHEBI:33019"/>
        <dbReference type="ChEBI" id="CHEBI:57623"/>
        <dbReference type="ChEBI" id="CHEBI:74411"/>
        <dbReference type="ChEBI" id="CHEBI:74415"/>
        <dbReference type="EC" id="2.5.1.75"/>
    </reaction>
</comment>
<comment type="cofactor">
    <cofactor evidence="1">
        <name>Mg(2+)</name>
        <dbReference type="ChEBI" id="CHEBI:18420"/>
    </cofactor>
</comment>
<comment type="subunit">
    <text evidence="1">Monomer.</text>
</comment>
<comment type="similarity">
    <text evidence="1">Belongs to the IPP transferase family.</text>
</comment>
<protein>
    <recommendedName>
        <fullName evidence="1">tRNA dimethylallyltransferase</fullName>
        <ecNumber evidence="1">2.5.1.75</ecNumber>
    </recommendedName>
    <alternativeName>
        <fullName evidence="1">Dimethylallyl diphosphate:tRNA dimethylallyltransferase</fullName>
        <shortName evidence="1">DMAPP:tRNA dimethylallyltransferase</shortName>
        <shortName evidence="1">DMATase</shortName>
    </alternativeName>
    <alternativeName>
        <fullName evidence="1">Isopentenyl-diphosphate:tRNA isopentenyltransferase</fullName>
        <shortName evidence="1">IPP transferase</shortName>
        <shortName evidence="1">IPPT</shortName>
        <shortName evidence="1">IPTase</shortName>
    </alternativeName>
</protein>
<name>MIAA_ANAPZ</name>
<organism>
    <name type="scientific">Anaplasma phagocytophilum (strain HZ)</name>
    <dbReference type="NCBI Taxonomy" id="212042"/>
    <lineage>
        <taxon>Bacteria</taxon>
        <taxon>Pseudomonadati</taxon>
        <taxon>Pseudomonadota</taxon>
        <taxon>Alphaproteobacteria</taxon>
        <taxon>Rickettsiales</taxon>
        <taxon>Anaplasmataceae</taxon>
        <taxon>Anaplasma</taxon>
        <taxon>phagocytophilum group</taxon>
    </lineage>
</organism>
<reference key="1">
    <citation type="journal article" date="2006" name="PLoS Genet.">
        <title>Comparative genomics of emerging human ehrlichiosis agents.</title>
        <authorList>
            <person name="Dunning Hotopp J.C."/>
            <person name="Lin M."/>
            <person name="Madupu R."/>
            <person name="Crabtree J."/>
            <person name="Angiuoli S.V."/>
            <person name="Eisen J.A."/>
            <person name="Seshadri R."/>
            <person name="Ren Q."/>
            <person name="Wu M."/>
            <person name="Utterback T.R."/>
            <person name="Smith S."/>
            <person name="Lewis M."/>
            <person name="Khouri H."/>
            <person name="Zhang C."/>
            <person name="Niu H."/>
            <person name="Lin Q."/>
            <person name="Ohashi N."/>
            <person name="Zhi N."/>
            <person name="Nelson W.C."/>
            <person name="Brinkac L.M."/>
            <person name="Dodson R.J."/>
            <person name="Rosovitz M.J."/>
            <person name="Sundaram J.P."/>
            <person name="Daugherty S.C."/>
            <person name="Davidsen T."/>
            <person name="Durkin A.S."/>
            <person name="Gwinn M.L."/>
            <person name="Haft D.H."/>
            <person name="Selengut J.D."/>
            <person name="Sullivan S.A."/>
            <person name="Zafar N."/>
            <person name="Zhou L."/>
            <person name="Benahmed F."/>
            <person name="Forberger H."/>
            <person name="Halpin R."/>
            <person name="Mulligan S."/>
            <person name="Robinson J."/>
            <person name="White O."/>
            <person name="Rikihisa Y."/>
            <person name="Tettelin H."/>
        </authorList>
    </citation>
    <scope>NUCLEOTIDE SEQUENCE [LARGE SCALE GENOMIC DNA]</scope>
    <source>
        <strain>HZ</strain>
    </source>
</reference>
<dbReference type="EC" id="2.5.1.75" evidence="1"/>
<dbReference type="EMBL" id="CP000235">
    <property type="protein sequence ID" value="ABD43241.1"/>
    <property type="molecule type" value="Genomic_DNA"/>
</dbReference>
<dbReference type="RefSeq" id="WP_011450557.1">
    <property type="nucleotide sequence ID" value="NC_007797.1"/>
</dbReference>
<dbReference type="SMR" id="Q2GKR7"/>
<dbReference type="STRING" id="212042.APH_0431"/>
<dbReference type="PaxDb" id="212042-APH_0431"/>
<dbReference type="EnsemblBacteria" id="ABD43241">
    <property type="protein sequence ID" value="ABD43241"/>
    <property type="gene ID" value="APH_0431"/>
</dbReference>
<dbReference type="GeneID" id="92747396"/>
<dbReference type="KEGG" id="aph:APH_0431"/>
<dbReference type="eggNOG" id="COG0324">
    <property type="taxonomic scope" value="Bacteria"/>
</dbReference>
<dbReference type="HOGENOM" id="CLU_032616_0_1_5"/>
<dbReference type="Proteomes" id="UP000001943">
    <property type="component" value="Chromosome"/>
</dbReference>
<dbReference type="GO" id="GO:0005524">
    <property type="term" value="F:ATP binding"/>
    <property type="evidence" value="ECO:0007669"/>
    <property type="project" value="UniProtKB-UniRule"/>
</dbReference>
<dbReference type="GO" id="GO:0052381">
    <property type="term" value="F:tRNA dimethylallyltransferase activity"/>
    <property type="evidence" value="ECO:0007669"/>
    <property type="project" value="UniProtKB-UniRule"/>
</dbReference>
<dbReference type="GO" id="GO:0006400">
    <property type="term" value="P:tRNA modification"/>
    <property type="evidence" value="ECO:0007669"/>
    <property type="project" value="TreeGrafter"/>
</dbReference>
<dbReference type="Gene3D" id="1.10.20.140">
    <property type="match status" value="1"/>
</dbReference>
<dbReference type="Gene3D" id="3.40.50.300">
    <property type="entry name" value="P-loop containing nucleotide triphosphate hydrolases"/>
    <property type="match status" value="1"/>
</dbReference>
<dbReference type="HAMAP" id="MF_00185">
    <property type="entry name" value="IPP_trans"/>
    <property type="match status" value="1"/>
</dbReference>
<dbReference type="InterPro" id="IPR039657">
    <property type="entry name" value="Dimethylallyltransferase"/>
</dbReference>
<dbReference type="InterPro" id="IPR018022">
    <property type="entry name" value="IPT"/>
</dbReference>
<dbReference type="InterPro" id="IPR027417">
    <property type="entry name" value="P-loop_NTPase"/>
</dbReference>
<dbReference type="NCBIfam" id="TIGR00174">
    <property type="entry name" value="miaA"/>
    <property type="match status" value="1"/>
</dbReference>
<dbReference type="PANTHER" id="PTHR11088">
    <property type="entry name" value="TRNA DIMETHYLALLYLTRANSFERASE"/>
    <property type="match status" value="1"/>
</dbReference>
<dbReference type="PANTHER" id="PTHR11088:SF60">
    <property type="entry name" value="TRNA DIMETHYLALLYLTRANSFERASE"/>
    <property type="match status" value="1"/>
</dbReference>
<dbReference type="Pfam" id="PF01715">
    <property type="entry name" value="IPPT"/>
    <property type="match status" value="1"/>
</dbReference>
<dbReference type="SUPFAM" id="SSF52540">
    <property type="entry name" value="P-loop containing nucleoside triphosphate hydrolases"/>
    <property type="match status" value="1"/>
</dbReference>
<keyword id="KW-0067">ATP-binding</keyword>
<keyword id="KW-0460">Magnesium</keyword>
<keyword id="KW-0547">Nucleotide-binding</keyword>
<keyword id="KW-0808">Transferase</keyword>
<keyword id="KW-0819">tRNA processing</keyword>
<feature type="chain" id="PRO_0000377066" description="tRNA dimethylallyltransferase">
    <location>
        <begin position="1"/>
        <end position="312"/>
    </location>
</feature>
<feature type="region of interest" description="Interaction with substrate tRNA" evidence="1">
    <location>
        <begin position="35"/>
        <end position="38"/>
    </location>
</feature>
<feature type="binding site" evidence="1">
    <location>
        <begin position="10"/>
        <end position="17"/>
    </location>
    <ligand>
        <name>ATP</name>
        <dbReference type="ChEBI" id="CHEBI:30616"/>
    </ligand>
</feature>
<feature type="binding site" evidence="1">
    <location>
        <begin position="12"/>
        <end position="17"/>
    </location>
    <ligand>
        <name>substrate</name>
    </ligand>
</feature>
<feature type="site" description="Interaction with substrate tRNA" evidence="1">
    <location>
        <position position="98"/>
    </location>
</feature>
<feature type="site" description="Interaction with substrate tRNA" evidence="1">
    <location>
        <position position="120"/>
    </location>
</feature>
<gene>
    <name evidence="1" type="primary">miaA</name>
    <name type="ordered locus">APH_0431</name>
</gene>
<proteinExistence type="inferred from homology"/>
<sequence>MEKEIVVVTGPTASGKSAACDIIADDLNCRVINCDSKQIYHGVPILTDQPVSVRDIHKLYGYVAPTQNYSAGLWLQDVKREVQQAWDDNVLPVITGGSGMYINSLVNGISDIPAIDPEVRKTARNLLESLGNAAFYEALVARDSNAARLHHNNTHQILRAFEVLEQTGTSIFTWWERSPRIKPFENCEVLVLLPPRNKLYDKINRRFLTMMQTDAISEVKYLMSLNLPMHAPVMKAHGAPEIVQYLQGKIEFMEAVEIAQKNTRHYAKRQCTWFRTQLPCDTRFFSSQNEIIDHVLAQYASKYPRTHTRPCN</sequence>